<comment type="function">
    <text evidence="1 5">A helicase/nuclease that prepares dsDNA breaks (DSB) for recombinational DNA repair. Binds to DSBs and unwinds DNA via a highly rapid and processive ATP-dependent bidirectional helicase activity. Holoenzyme degrades any linearized DNA that is unable to undergo homologous recombination. In the holoenzyme this subunit contributes DNA-dependent ATPase activity, exonuclease activity and 3'-5' helicase activity (By similarity). Unlike the case in E.coli, suppresses RecA-dependent homologous recombination, is instead required for single-strand annealing pathway repair of DSB (PubMed:21219454).</text>
</comment>
<comment type="catalytic activity">
    <reaction evidence="2">
        <text>Exonucleolytic cleavage (in the presence of ATP) in either 5'- to 3'- or 3'- to 5'-direction to yield 5'-phosphooligonucleotides.</text>
        <dbReference type="EC" id="3.1.11.5"/>
    </reaction>
</comment>
<comment type="catalytic activity">
    <reaction evidence="2">
        <text>Couples ATP hydrolysis with the unwinding of duplex DNA by translocating in the 3'-5' direction.</text>
        <dbReference type="EC" id="5.6.2.4"/>
    </reaction>
</comment>
<comment type="catalytic activity">
    <reaction evidence="2">
        <text>ATP + H2O = ADP + phosphate + H(+)</text>
        <dbReference type="Rhea" id="RHEA:13065"/>
        <dbReference type="ChEBI" id="CHEBI:15377"/>
        <dbReference type="ChEBI" id="CHEBI:15378"/>
        <dbReference type="ChEBI" id="CHEBI:30616"/>
        <dbReference type="ChEBI" id="CHEBI:43474"/>
        <dbReference type="ChEBI" id="CHEBI:456216"/>
        <dbReference type="EC" id="5.6.2.4"/>
    </reaction>
</comment>
<comment type="cofactor">
    <cofactor evidence="2">
        <name>Mg(2+)</name>
        <dbReference type="ChEBI" id="CHEBI:18420"/>
    </cofactor>
    <text evidence="2">Binds 1 Mg(2+) ion per subunit.</text>
</comment>
<comment type="subunit">
    <text evidence="2">Heterotrimer of RecB, RecC and RecD. All subunits contribute to DNA-binding. Interacts with RecA.</text>
</comment>
<comment type="domain">
    <text evidence="2">The N-terminal DNA-binding domain is a ssDNA-dependent ATPase and has ATP-dependent 3'-5' helicase function. This domain interacts with RecC.</text>
</comment>
<comment type="domain">
    <text evidence="2">The C-terminal domain has nuclease activity and interacts with RecD. It interacts with RecA, facilitating its loading onto ssDNA.</text>
</comment>
<comment type="disruption phenotype">
    <text evidence="3 4 5">Unlike E.coli, triple recB-recC-recD deletion is no more sensitive to DNA damaging agents (UV light sensitivity, mitomycin C, methyl methanesulphonate or ionizing radiation) than wild-type; has reduced resistance to H(2)O(2) which is exacerbated by further adnA-adnB deletion. Triple mutants have no effect on homologous recombination or on NHEJ of blunt-end, 5'- or 3'-overhang DSBs or on incompatible 3'-chromosomal overhangs. However the triple mutant disrupts all single-strand annealing repair of DSB.</text>
</comment>
<comment type="miscellaneous">
    <text evidence="2">In the RecBCD complex, RecB has a slow 3'-5' helicase, an exonuclease activity and loads RecA onto ssDNA, RecD has a fast 5'-3' helicase activity, while RecC stimulates the ATPase and processivity of the RecB helicase and contributes to recognition of the Chi site.</text>
</comment>
<comment type="similarity">
    <text evidence="2">Belongs to the helicase family. UvrD subfamily.</text>
</comment>
<feature type="chain" id="PRO_0000425941" description="RecBCD enzyme subunit RecB">
    <location>
        <begin position="1"/>
        <end position="1083"/>
    </location>
</feature>
<feature type="domain" description="UvrD-like helicase ATP-binding" evidence="2">
    <location>
        <begin position="1"/>
        <end position="323"/>
    </location>
</feature>
<feature type="domain" description="UvrD-like helicase C-terminal" evidence="2">
    <location>
        <begin position="349"/>
        <end position="607"/>
    </location>
</feature>
<feature type="region of interest" description="DNA-binding and helicase activity, interacts with RecC" evidence="2">
    <location>
        <begin position="1"/>
        <end position="704"/>
    </location>
</feature>
<feature type="region of interest" description="Nuclease activity, interacts with RecD and RecA" evidence="2">
    <location>
        <begin position="765"/>
        <end position="1083"/>
    </location>
</feature>
<feature type="active site" description="For nuclease activity" evidence="2">
    <location>
        <position position="975"/>
    </location>
</feature>
<feature type="binding site" evidence="2">
    <location>
        <begin position="21"/>
        <end position="28"/>
    </location>
    <ligand>
        <name>ATP</name>
        <dbReference type="ChEBI" id="CHEBI:30616"/>
    </ligand>
</feature>
<feature type="binding site" evidence="2">
    <location>
        <position position="830"/>
    </location>
    <ligand>
        <name>Mg(2+)</name>
        <dbReference type="ChEBI" id="CHEBI:18420"/>
    </ligand>
</feature>
<feature type="binding site" evidence="2">
    <location>
        <position position="962"/>
    </location>
    <ligand>
        <name>Mg(2+)</name>
        <dbReference type="ChEBI" id="CHEBI:18420"/>
    </ligand>
</feature>
<feature type="binding site" evidence="2">
    <location>
        <position position="975"/>
    </location>
    <ligand>
        <name>Mg(2+)</name>
        <dbReference type="ChEBI" id="CHEBI:18420"/>
    </ligand>
</feature>
<reference key="1">
    <citation type="submission" date="2006-10" db="EMBL/GenBank/DDBJ databases">
        <authorList>
            <person name="Fleischmann R.D."/>
            <person name="Dodson R.J."/>
            <person name="Haft D.H."/>
            <person name="Merkel J.S."/>
            <person name="Nelson W.C."/>
            <person name="Fraser C.M."/>
        </authorList>
    </citation>
    <scope>NUCLEOTIDE SEQUENCE [LARGE SCALE GENOMIC DNA]</scope>
    <source>
        <strain>ATCC 700084 / mc(2)155</strain>
    </source>
</reference>
<reference key="2">
    <citation type="journal article" date="2007" name="Genome Biol.">
        <title>Interrupted coding sequences in Mycobacterium smegmatis: authentic mutations or sequencing errors?</title>
        <authorList>
            <person name="Deshayes C."/>
            <person name="Perrodou E."/>
            <person name="Gallien S."/>
            <person name="Euphrasie D."/>
            <person name="Schaeffer C."/>
            <person name="Van-Dorsselaer A."/>
            <person name="Poch O."/>
            <person name="Lecompte O."/>
            <person name="Reyrat J.-M."/>
        </authorList>
    </citation>
    <scope>NUCLEOTIDE SEQUENCE [LARGE SCALE GENOMIC DNA]</scope>
    <source>
        <strain>ATCC 700084 / mc(2)155</strain>
    </source>
</reference>
<reference key="3">
    <citation type="journal article" date="2009" name="Genome Res.">
        <title>Ortho-proteogenomics: multiple proteomes investigation through orthology and a new MS-based protocol.</title>
        <authorList>
            <person name="Gallien S."/>
            <person name="Perrodou E."/>
            <person name="Carapito C."/>
            <person name="Deshayes C."/>
            <person name="Reyrat J.-M."/>
            <person name="Van Dorsselaer A."/>
            <person name="Poch O."/>
            <person name="Schaeffer C."/>
            <person name="Lecompte O."/>
        </authorList>
    </citation>
    <scope>NUCLEOTIDE SEQUENCE [LARGE SCALE GENOMIC DNA]</scope>
    <source>
        <strain>ATCC 700084 / mc(2)155</strain>
    </source>
</reference>
<reference key="4">
    <citation type="journal article" date="2007" name="J. Bacteriol.">
        <title>Mycobacterial nonhomologous end joining mediates mutagenic repair of chromosomal double-strand DNA breaks.</title>
        <authorList>
            <person name="Stephanou N.C."/>
            <person name="Gao F."/>
            <person name="Bongiorno P."/>
            <person name="Ehrt S."/>
            <person name="Schnappinger D."/>
            <person name="Shuman S."/>
            <person name="Glickman M.S."/>
        </authorList>
    </citation>
    <scope>DISRUPTION PHENOTYPE</scope>
    <source>
        <strain>ATCC 700084 / mc(2)155</strain>
    </source>
</reference>
<reference key="5">
    <citation type="journal article" date="2008" name="Genes Dev.">
        <title>The pathways and outcomes of mycobacterial NHEJ depend on the structure of the broken DNA ends.</title>
        <authorList>
            <person name="Aniukwu J."/>
            <person name="Glickman M.S."/>
            <person name="Shuman S."/>
        </authorList>
    </citation>
    <scope>DISRUPTION PHENOTYPE</scope>
    <source>
        <strain>ATCC 700084 / mc(2)155</strain>
    </source>
</reference>
<reference key="6">
    <citation type="journal article" date="2011" name="Mol. Microbiol.">
        <title>Mycobacteria exploit three genetically distinct DNA double-strand break repair pathways.</title>
        <authorList>
            <person name="Gupta R."/>
            <person name="Barkan D."/>
            <person name="Redelman-Sidi G."/>
            <person name="Shuman S."/>
            <person name="Glickman M.S."/>
        </authorList>
    </citation>
    <scope>FUNCTION</scope>
    <scope>DISRUPTION PHENOTYPE</scope>
    <source>
        <strain>ATCC 700084 / mc(2)155</strain>
    </source>
</reference>
<sequence>MKVFDLLGPLPAPNTTTVLEASAGTGKTFALAGLVTRFVAEGVATLDQMLLITFGRAASQELRERVRAQIVAALVALDDPSRACNDLEEYLVKTDQQARRRRLRDALAGFDAATIATTHQFCQIVLKSLGVAGDSDAGVTLVESLDDLVSEIVDDLYLAHFGGQKDDPELSYPEALKLARVVVGNPATQLRPRDPDPDSPAAVRLKFARDVLAELEIRKRRRGVLGYDDLLTRLADALEPEDSPARVRMQQRWPIVMVDEFQDTDPVQWQVIERAFSGRSTLVLIGDPKQAIYAFRGGDIATYLRAAATAGDKQTLGTNWRSDRALVDRLQAVLRGAQLGGPDIVVHDVQARHQGHRLVGAPRNDPFRLRVVSRKPGNTRVIPIDQLRRHIGRDLAADISALLNSGATWCDQPVQAKDIAVITETHKDARACHAALLAAGIPAVYTGDSDVFTSEAAEDWLYLLEAFDQPHRPGLVRAAAATMFFGETAESLAAGGDALTDRVADTLREWAGHARERGVAAIFEAAQLAGMGKRVLSWQGGERLMTDLAHMTQLLQDTAHREGFGLAALRDWLRTQRSERGGESERNRRLDSDAAAVQIMTVWVSKGLQFPVVYLPFAFNRYVPEPDLVLFHDDGQRCLHVGGADPAVARAGRAEAAGDDSRLTYVALTRAQSQVVAWWAPSYDEPNGGLSRLMRGRAPGEAIVPDKCSPPKISDEDALERLRAWEAAGGPVIEESVIGAVSPVPPEPAPEDLAARKFFRAIDMAWKRTSYSGLLRAAETAGVGVSSEPEVTERDDEFDDIPVVAPAEGADVPSPMAHLPTGAAFGSLVHAVLETADPFAEDLTAELATHIDAHSQHWPVEVETAELAAALVPMHDTPLGPLAPGLTLRQIGLRDRLCELDFEFPMAGGDLRGGRFARLSDVGELLREYLPADDPLAVYAERLSTGILGVQPLRGYLSGSVDAVLRVGEKFVIVDYKTNWLGTGDGTLTAADYGRRRMVEAMLHSDYPLQALLYAVVLHRYLGWRLSGYDPATHLGGVLYLFVRGMCGAGTPVVDGHPAGVFSWEPPADLVVALSKLLDAEAP</sequence>
<proteinExistence type="inferred from homology"/>
<organism>
    <name type="scientific">Mycolicibacterium smegmatis (strain ATCC 700084 / mc(2)155)</name>
    <name type="common">Mycobacterium smegmatis</name>
    <dbReference type="NCBI Taxonomy" id="246196"/>
    <lineage>
        <taxon>Bacteria</taxon>
        <taxon>Bacillati</taxon>
        <taxon>Actinomycetota</taxon>
        <taxon>Actinomycetes</taxon>
        <taxon>Mycobacteriales</taxon>
        <taxon>Mycobacteriaceae</taxon>
        <taxon>Mycolicibacterium</taxon>
    </lineage>
</organism>
<dbReference type="EC" id="3.1.11.5" evidence="2"/>
<dbReference type="EC" id="5.6.2.4" evidence="2"/>
<dbReference type="EMBL" id="CP000480">
    <property type="protein sequence ID" value="ABK70050.1"/>
    <property type="molecule type" value="Genomic_DNA"/>
</dbReference>
<dbReference type="EMBL" id="CP001663">
    <property type="protein sequence ID" value="AFP37765.1"/>
    <property type="molecule type" value="Genomic_DNA"/>
</dbReference>
<dbReference type="RefSeq" id="WP_011727605.1">
    <property type="nucleotide sequence ID" value="NZ_SIJM01000030.1"/>
</dbReference>
<dbReference type="RefSeq" id="YP_885717.1">
    <property type="nucleotide sequence ID" value="NC_008596.1"/>
</dbReference>
<dbReference type="SMR" id="A0QS29"/>
<dbReference type="STRING" id="246196.MSMEG_1327"/>
<dbReference type="PaxDb" id="246196-MSMEI_1289"/>
<dbReference type="GeneID" id="93456170"/>
<dbReference type="KEGG" id="msb:LJ00_06615"/>
<dbReference type="KEGG" id="msg:MSMEI_1289"/>
<dbReference type="KEGG" id="msm:MSMEG_1327"/>
<dbReference type="PATRIC" id="fig|246196.19.peg.1314"/>
<dbReference type="eggNOG" id="COG1074">
    <property type="taxonomic scope" value="Bacteria"/>
</dbReference>
<dbReference type="OrthoDB" id="9810135at2"/>
<dbReference type="Proteomes" id="UP000000757">
    <property type="component" value="Chromosome"/>
</dbReference>
<dbReference type="Proteomes" id="UP000006158">
    <property type="component" value="Chromosome"/>
</dbReference>
<dbReference type="GO" id="GO:0005829">
    <property type="term" value="C:cytosol"/>
    <property type="evidence" value="ECO:0007669"/>
    <property type="project" value="TreeGrafter"/>
</dbReference>
<dbReference type="GO" id="GO:0009338">
    <property type="term" value="C:exodeoxyribonuclease V complex"/>
    <property type="evidence" value="ECO:0007669"/>
    <property type="project" value="TreeGrafter"/>
</dbReference>
<dbReference type="GO" id="GO:0043138">
    <property type="term" value="F:3'-5' DNA helicase activity"/>
    <property type="evidence" value="ECO:0007669"/>
    <property type="project" value="UniProtKB-UniRule"/>
</dbReference>
<dbReference type="GO" id="GO:0005524">
    <property type="term" value="F:ATP binding"/>
    <property type="evidence" value="ECO:0007669"/>
    <property type="project" value="UniProtKB-UniRule"/>
</dbReference>
<dbReference type="GO" id="GO:0016887">
    <property type="term" value="F:ATP hydrolysis activity"/>
    <property type="evidence" value="ECO:0007669"/>
    <property type="project" value="RHEA"/>
</dbReference>
<dbReference type="GO" id="GO:0003677">
    <property type="term" value="F:DNA binding"/>
    <property type="evidence" value="ECO:0007669"/>
    <property type="project" value="UniProtKB-UniRule"/>
</dbReference>
<dbReference type="GO" id="GO:0008854">
    <property type="term" value="F:exodeoxyribonuclease V activity"/>
    <property type="evidence" value="ECO:0007669"/>
    <property type="project" value="UniProtKB-EC"/>
</dbReference>
<dbReference type="GO" id="GO:0000287">
    <property type="term" value="F:magnesium ion binding"/>
    <property type="evidence" value="ECO:0007669"/>
    <property type="project" value="UniProtKB-UniRule"/>
</dbReference>
<dbReference type="GO" id="GO:0000724">
    <property type="term" value="P:double-strand break repair via homologous recombination"/>
    <property type="evidence" value="ECO:0007669"/>
    <property type="project" value="UniProtKB-UniRule"/>
</dbReference>
<dbReference type="CDD" id="cd22352">
    <property type="entry name" value="RecB_C-like"/>
    <property type="match status" value="1"/>
</dbReference>
<dbReference type="Gene3D" id="3.90.320.10">
    <property type="match status" value="1"/>
</dbReference>
<dbReference type="Gene3D" id="3.40.50.300">
    <property type="entry name" value="P-loop containing nucleotide triphosphate hydrolases"/>
    <property type="match status" value="2"/>
</dbReference>
<dbReference type="Gene3D" id="1.10.486.10">
    <property type="entry name" value="PCRA, domain 4"/>
    <property type="match status" value="1"/>
</dbReference>
<dbReference type="HAMAP" id="MF_01485">
    <property type="entry name" value="RecB"/>
    <property type="match status" value="1"/>
</dbReference>
<dbReference type="InterPro" id="IPR014017">
    <property type="entry name" value="DNA_helicase_UvrD-like_C"/>
</dbReference>
<dbReference type="InterPro" id="IPR000212">
    <property type="entry name" value="DNA_helicase_UvrD/REP"/>
</dbReference>
<dbReference type="InterPro" id="IPR027417">
    <property type="entry name" value="P-loop_NTPase"/>
</dbReference>
<dbReference type="InterPro" id="IPR011604">
    <property type="entry name" value="PDDEXK-like_dom_sf"/>
</dbReference>
<dbReference type="InterPro" id="IPR038726">
    <property type="entry name" value="PDDEXK_AddAB-type"/>
</dbReference>
<dbReference type="InterPro" id="IPR004586">
    <property type="entry name" value="RecB"/>
</dbReference>
<dbReference type="InterPro" id="IPR011335">
    <property type="entry name" value="Restrct_endonuc-II-like"/>
</dbReference>
<dbReference type="InterPro" id="IPR014016">
    <property type="entry name" value="UvrD-like_ATP-bd"/>
</dbReference>
<dbReference type="NCBIfam" id="TIGR00609">
    <property type="entry name" value="recB"/>
    <property type="match status" value="1"/>
</dbReference>
<dbReference type="PANTHER" id="PTHR11070:SF23">
    <property type="entry name" value="RECBCD ENZYME SUBUNIT RECB"/>
    <property type="match status" value="1"/>
</dbReference>
<dbReference type="PANTHER" id="PTHR11070">
    <property type="entry name" value="UVRD / RECB / PCRA DNA HELICASE FAMILY MEMBER"/>
    <property type="match status" value="1"/>
</dbReference>
<dbReference type="Pfam" id="PF12705">
    <property type="entry name" value="PDDEXK_1"/>
    <property type="match status" value="1"/>
</dbReference>
<dbReference type="Pfam" id="PF00580">
    <property type="entry name" value="UvrD-helicase"/>
    <property type="match status" value="1"/>
</dbReference>
<dbReference type="Pfam" id="PF13361">
    <property type="entry name" value="UvrD_C"/>
    <property type="match status" value="1"/>
</dbReference>
<dbReference type="SUPFAM" id="SSF52540">
    <property type="entry name" value="P-loop containing nucleoside triphosphate hydrolases"/>
    <property type="match status" value="1"/>
</dbReference>
<dbReference type="SUPFAM" id="SSF52980">
    <property type="entry name" value="Restriction endonuclease-like"/>
    <property type="match status" value="1"/>
</dbReference>
<dbReference type="PROSITE" id="PS51198">
    <property type="entry name" value="UVRD_HELICASE_ATP_BIND"/>
    <property type="match status" value="1"/>
</dbReference>
<dbReference type="PROSITE" id="PS51217">
    <property type="entry name" value="UVRD_HELICASE_CTER"/>
    <property type="match status" value="1"/>
</dbReference>
<evidence type="ECO:0000250" key="1">
    <source>
        <dbReference type="UniProtKB" id="P08394"/>
    </source>
</evidence>
<evidence type="ECO:0000255" key="2">
    <source>
        <dbReference type="HAMAP-Rule" id="MF_01485"/>
    </source>
</evidence>
<evidence type="ECO:0000269" key="3">
    <source>
    </source>
</evidence>
<evidence type="ECO:0000269" key="4">
    <source>
    </source>
</evidence>
<evidence type="ECO:0000269" key="5">
    <source>
    </source>
</evidence>
<accession>A0QS29</accession>
<gene>
    <name evidence="2" type="primary">recB</name>
    <name type="ordered locus">MSMEG_1327</name>
    <name type="ordered locus">MSMEI_1289</name>
</gene>
<keyword id="KW-0067">ATP-binding</keyword>
<keyword id="KW-0227">DNA damage</keyword>
<keyword id="KW-0234">DNA repair</keyword>
<keyword id="KW-0238">DNA-binding</keyword>
<keyword id="KW-0269">Exonuclease</keyword>
<keyword id="KW-0347">Helicase</keyword>
<keyword id="KW-0378">Hydrolase</keyword>
<keyword id="KW-0413">Isomerase</keyword>
<keyword id="KW-0460">Magnesium</keyword>
<keyword id="KW-0479">Metal-binding</keyword>
<keyword id="KW-0540">Nuclease</keyword>
<keyword id="KW-0547">Nucleotide-binding</keyword>
<keyword id="KW-1185">Reference proteome</keyword>
<name>RECB_MYCS2</name>
<protein>
    <recommendedName>
        <fullName evidence="2">RecBCD enzyme subunit RecB</fullName>
        <ecNumber evidence="2">3.1.11.5</ecNumber>
        <ecNumber evidence="2">5.6.2.4</ecNumber>
    </recommendedName>
    <alternativeName>
        <fullName evidence="2">DNA 3'-5' helicase subunit RecB</fullName>
    </alternativeName>
    <alternativeName>
        <fullName evidence="2">Exonuclease V subunit RecB</fullName>
        <shortName evidence="2">ExoV subunit RecB</shortName>
    </alternativeName>
    <alternativeName>
        <fullName evidence="2">Helicase/nuclease RecBCD subunit RecB</fullName>
    </alternativeName>
</protein>